<proteinExistence type="evidence at protein level"/>
<dbReference type="EMBL" id="Y14494">
    <property type="protein sequence ID" value="CAA74834.1"/>
    <property type="molecule type" value="mRNA"/>
</dbReference>
<dbReference type="EMBL" id="AJ496568">
    <property type="protein sequence ID" value="CAD43090.1"/>
    <property type="molecule type" value="mRNA"/>
</dbReference>
<dbReference type="EMBL" id="AK091071">
    <property type="protein sequence ID" value="BAG52276.1"/>
    <property type="molecule type" value="mRNA"/>
</dbReference>
<dbReference type="EMBL" id="AC015976">
    <property type="status" value="NOT_ANNOTATED_CDS"/>
    <property type="molecule type" value="Genomic_DNA"/>
</dbReference>
<dbReference type="EMBL" id="AC068039">
    <property type="protein sequence ID" value="AAY24134.1"/>
    <property type="molecule type" value="Genomic_DNA"/>
</dbReference>
<dbReference type="EMBL" id="AC114745">
    <property type="status" value="NOT_ANNOTATED_CDS"/>
    <property type="molecule type" value="Genomic_DNA"/>
</dbReference>
<dbReference type="EMBL" id="CH471058">
    <property type="protein sequence ID" value="EAX11196.1"/>
    <property type="molecule type" value="Genomic_DNA"/>
</dbReference>
<dbReference type="EMBL" id="BC016932">
    <property type="protein sequence ID" value="AAH16932.1"/>
    <property type="molecule type" value="mRNA"/>
</dbReference>
<dbReference type="CCDS" id="CCDS33327.1">
    <molecule id="O75746-1"/>
</dbReference>
<dbReference type="RefSeq" id="NP_003696.2">
    <molecule id="O75746-1"/>
    <property type="nucleotide sequence ID" value="NM_003705.4"/>
</dbReference>
<dbReference type="PDB" id="4P5X">
    <property type="method" value="X-ray"/>
    <property type="resolution" value="2.26 A"/>
    <property type="chains" value="A=2-311"/>
</dbReference>
<dbReference type="PDB" id="4P60">
    <property type="method" value="X-ray"/>
    <property type="resolution" value="2.40 A"/>
    <property type="chains" value="A/B=2-311"/>
</dbReference>
<dbReference type="PDBsum" id="4P5X"/>
<dbReference type="PDBsum" id="4P60"/>
<dbReference type="SMR" id="O75746"/>
<dbReference type="BioGRID" id="114164">
    <property type="interactions" value="254"/>
</dbReference>
<dbReference type="FunCoup" id="O75746">
    <property type="interactions" value="1798"/>
</dbReference>
<dbReference type="IntAct" id="O75746">
    <property type="interactions" value="79"/>
</dbReference>
<dbReference type="MINT" id="O75746"/>
<dbReference type="STRING" id="9606.ENSP00000388658"/>
<dbReference type="DrugBank" id="DB00128">
    <property type="generic name" value="Aspartic acid"/>
</dbReference>
<dbReference type="DrugCentral" id="O75746"/>
<dbReference type="TCDB" id="2.A.29.14.1">
    <property type="family name" value="the mitochondrial carrier (mc) family"/>
</dbReference>
<dbReference type="GlyGen" id="O75746">
    <property type="glycosylation" value="1 site, 1 O-linked glycan (1 site)"/>
</dbReference>
<dbReference type="iPTMnet" id="O75746"/>
<dbReference type="PhosphoSitePlus" id="O75746"/>
<dbReference type="SwissPalm" id="O75746"/>
<dbReference type="BioMuta" id="SLC25A12"/>
<dbReference type="jPOST" id="O75746"/>
<dbReference type="MassIVE" id="O75746"/>
<dbReference type="PaxDb" id="9606-ENSP00000388658"/>
<dbReference type="PeptideAtlas" id="O75746"/>
<dbReference type="ProteomicsDB" id="3583"/>
<dbReference type="ProteomicsDB" id="50177">
    <molecule id="O75746-1"/>
</dbReference>
<dbReference type="Pumba" id="O75746"/>
<dbReference type="Antibodypedia" id="33855">
    <property type="antibodies" value="227 antibodies from 27 providers"/>
</dbReference>
<dbReference type="DNASU" id="8604"/>
<dbReference type="Ensembl" id="ENST00000422440.7">
    <molecule id="O75746-1"/>
    <property type="protein sequence ID" value="ENSP00000388658.2"/>
    <property type="gene ID" value="ENSG00000115840.14"/>
</dbReference>
<dbReference type="Ensembl" id="ENST00000709717.1">
    <molecule id="O75746-1"/>
    <property type="protein sequence ID" value="ENSP00000517838.1"/>
    <property type="gene ID" value="ENSG00000292099.1"/>
</dbReference>
<dbReference type="GeneID" id="8604"/>
<dbReference type="KEGG" id="hsa:8604"/>
<dbReference type="MANE-Select" id="ENST00000422440.7">
    <property type="protein sequence ID" value="ENSP00000388658.2"/>
    <property type="RefSeq nucleotide sequence ID" value="NM_003705.5"/>
    <property type="RefSeq protein sequence ID" value="NP_003696.2"/>
</dbReference>
<dbReference type="UCSC" id="uc002uhh.4">
    <molecule id="O75746-1"/>
    <property type="organism name" value="human"/>
</dbReference>
<dbReference type="AGR" id="HGNC:10982"/>
<dbReference type="CTD" id="8604"/>
<dbReference type="DisGeNET" id="8604"/>
<dbReference type="GeneCards" id="SLC25A12"/>
<dbReference type="HGNC" id="HGNC:10982">
    <property type="gene designation" value="SLC25A12"/>
</dbReference>
<dbReference type="HPA" id="ENSG00000115840">
    <property type="expression patterns" value="Tissue enhanced (skeletal)"/>
</dbReference>
<dbReference type="MalaCards" id="SLC25A12"/>
<dbReference type="MIM" id="603667">
    <property type="type" value="gene"/>
</dbReference>
<dbReference type="MIM" id="612949">
    <property type="type" value="phenotype"/>
</dbReference>
<dbReference type="neXtProt" id="NX_O75746"/>
<dbReference type="OpenTargets" id="ENSG00000115840"/>
<dbReference type="Orphanet" id="353217">
    <property type="disease" value="Epileptic encephalopathy with global cerebral demyelination"/>
</dbReference>
<dbReference type="PharmGKB" id="PA35858"/>
<dbReference type="VEuPathDB" id="HostDB:ENSG00000115840"/>
<dbReference type="eggNOG" id="KOG0751">
    <property type="taxonomic scope" value="Eukaryota"/>
</dbReference>
<dbReference type="GeneTree" id="ENSGT00940000155963"/>
<dbReference type="HOGENOM" id="CLU_014931_3_0_1"/>
<dbReference type="InParanoid" id="O75746"/>
<dbReference type="OMA" id="AFQNVMR"/>
<dbReference type="OrthoDB" id="2161at2759"/>
<dbReference type="PAN-GO" id="O75746">
    <property type="GO annotations" value="5 GO annotations based on evolutionary models"/>
</dbReference>
<dbReference type="PhylomeDB" id="O75746"/>
<dbReference type="TreeFam" id="TF313209"/>
<dbReference type="PathwayCommons" id="O75746"/>
<dbReference type="Reactome" id="R-HSA-1268020">
    <property type="pathway name" value="Mitochondrial protein import"/>
</dbReference>
<dbReference type="Reactome" id="R-HSA-8963693">
    <property type="pathway name" value="Aspartate and asparagine metabolism"/>
</dbReference>
<dbReference type="Reactome" id="R-HSA-9856872">
    <property type="pathway name" value="Malate-aspartate shuttle"/>
</dbReference>
<dbReference type="SignaLink" id="O75746"/>
<dbReference type="SIGNOR" id="O75746"/>
<dbReference type="BioGRID-ORCS" id="8604">
    <property type="hits" value="9 hits in 1157 CRISPR screens"/>
</dbReference>
<dbReference type="CD-CODE" id="FB4E32DD">
    <property type="entry name" value="Presynaptic clusters and postsynaptic densities"/>
</dbReference>
<dbReference type="ChiTaRS" id="SLC25A12">
    <property type="organism name" value="human"/>
</dbReference>
<dbReference type="EvolutionaryTrace" id="O75746"/>
<dbReference type="GeneWiki" id="SLC25A12"/>
<dbReference type="GenomeRNAi" id="8604"/>
<dbReference type="Pharos" id="O75746">
    <property type="development level" value="Tbio"/>
</dbReference>
<dbReference type="PRO" id="PR:O75746"/>
<dbReference type="Proteomes" id="UP000005640">
    <property type="component" value="Chromosome 2"/>
</dbReference>
<dbReference type="RNAct" id="O75746">
    <property type="molecule type" value="protein"/>
</dbReference>
<dbReference type="Bgee" id="ENSG00000115840">
    <property type="expression patterns" value="Expressed in biceps brachii and 204 other cell types or tissues"/>
</dbReference>
<dbReference type="ExpressionAtlas" id="O75746">
    <property type="expression patterns" value="baseline and differential"/>
</dbReference>
<dbReference type="GO" id="GO:0016020">
    <property type="term" value="C:membrane"/>
    <property type="evidence" value="ECO:0000303"/>
    <property type="project" value="UniProtKB"/>
</dbReference>
<dbReference type="GO" id="GO:0005743">
    <property type="term" value="C:mitochondrial inner membrane"/>
    <property type="evidence" value="ECO:0000314"/>
    <property type="project" value="UniProtKB"/>
</dbReference>
<dbReference type="GO" id="GO:0005739">
    <property type="term" value="C:mitochondrion"/>
    <property type="evidence" value="ECO:0000314"/>
    <property type="project" value="UniProtKB"/>
</dbReference>
<dbReference type="GO" id="GO:0000514">
    <property type="term" value="F:3-sulfino-L-alanine: proton, glutamate antiporter activity"/>
    <property type="evidence" value="ECO:0000314"/>
    <property type="project" value="UniProtKB"/>
</dbReference>
<dbReference type="GO" id="GO:0000515">
    <property type="term" value="F:aspartate:glutamate, proton antiporter activity"/>
    <property type="evidence" value="ECO:0000314"/>
    <property type="project" value="UniProtKB"/>
</dbReference>
<dbReference type="GO" id="GO:0005509">
    <property type="term" value="F:calcium ion binding"/>
    <property type="evidence" value="ECO:0000314"/>
    <property type="project" value="UniProtKB"/>
</dbReference>
<dbReference type="GO" id="GO:0042802">
    <property type="term" value="F:identical protein binding"/>
    <property type="evidence" value="ECO:0000314"/>
    <property type="project" value="UniProtKB"/>
</dbReference>
<dbReference type="GO" id="GO:0015183">
    <property type="term" value="F:L-aspartate transmembrane transporter activity"/>
    <property type="evidence" value="ECO:0000318"/>
    <property type="project" value="GO_Central"/>
</dbReference>
<dbReference type="GO" id="GO:0005313">
    <property type="term" value="F:L-glutamate transmembrane transporter activity"/>
    <property type="evidence" value="ECO:0000318"/>
    <property type="project" value="GO_Central"/>
</dbReference>
<dbReference type="GO" id="GO:0015810">
    <property type="term" value="P:aspartate transmembrane transport"/>
    <property type="evidence" value="ECO:0000314"/>
    <property type="project" value="UniProtKB"/>
</dbReference>
<dbReference type="GO" id="GO:0015813">
    <property type="term" value="P:L-glutamate transmembrane transport"/>
    <property type="evidence" value="ECO:0000314"/>
    <property type="project" value="UniProtKB"/>
</dbReference>
<dbReference type="GO" id="GO:0043490">
    <property type="term" value="P:malate-aspartate shuttle"/>
    <property type="evidence" value="ECO:0000314"/>
    <property type="project" value="UniProtKB"/>
</dbReference>
<dbReference type="GO" id="GO:0051592">
    <property type="term" value="P:response to calcium ion"/>
    <property type="evidence" value="ECO:0000314"/>
    <property type="project" value="UniProtKB"/>
</dbReference>
<dbReference type="FunFam" id="1.50.40.10:FF:000004">
    <property type="entry name" value="Calcium-binding mitochondrial carrier protein Aralar1"/>
    <property type="match status" value="1"/>
</dbReference>
<dbReference type="FunFam" id="1.10.238.10:FF:000064">
    <property type="entry name" value="calcium-binding mitochondrial carrier protein Aralar1 isoform X1"/>
    <property type="match status" value="1"/>
</dbReference>
<dbReference type="Gene3D" id="1.10.238.10">
    <property type="entry name" value="EF-hand"/>
    <property type="match status" value="2"/>
</dbReference>
<dbReference type="Gene3D" id="1.50.40.10">
    <property type="entry name" value="Mitochondrial carrier domain"/>
    <property type="match status" value="1"/>
</dbReference>
<dbReference type="InterPro" id="IPR011992">
    <property type="entry name" value="EF-hand-dom_pair"/>
</dbReference>
<dbReference type="InterPro" id="IPR018247">
    <property type="entry name" value="EF_Hand_1_Ca_BS"/>
</dbReference>
<dbReference type="InterPro" id="IPR002048">
    <property type="entry name" value="EF_hand_dom"/>
</dbReference>
<dbReference type="InterPro" id="IPR002067">
    <property type="entry name" value="Mit_carrier"/>
</dbReference>
<dbReference type="InterPro" id="IPR051028">
    <property type="entry name" value="Mito_Solute_Carrier"/>
</dbReference>
<dbReference type="InterPro" id="IPR018108">
    <property type="entry name" value="Mitochondrial_sb/sol_carrier"/>
</dbReference>
<dbReference type="InterPro" id="IPR023395">
    <property type="entry name" value="Mt_carrier_dom_sf"/>
</dbReference>
<dbReference type="PANTHER" id="PTHR45678:SF7">
    <property type="entry name" value="ELECTROGENIC ASPARTATE_GLUTAMATE ANTIPORTER SLC25A12, MITOCHONDRIAL"/>
    <property type="match status" value="1"/>
</dbReference>
<dbReference type="PANTHER" id="PTHR45678">
    <property type="entry name" value="MITOCHONDRIAL 2-OXODICARBOXYLATE CARRIER 1-RELATED"/>
    <property type="match status" value="1"/>
</dbReference>
<dbReference type="Pfam" id="PF00153">
    <property type="entry name" value="Mito_carr"/>
    <property type="match status" value="3"/>
</dbReference>
<dbReference type="PRINTS" id="PR00926">
    <property type="entry name" value="MITOCARRIER"/>
</dbReference>
<dbReference type="SMART" id="SM00054">
    <property type="entry name" value="EFh"/>
    <property type="match status" value="3"/>
</dbReference>
<dbReference type="SUPFAM" id="SSF47473">
    <property type="entry name" value="EF-hand"/>
    <property type="match status" value="2"/>
</dbReference>
<dbReference type="SUPFAM" id="SSF103506">
    <property type="entry name" value="Mitochondrial carrier"/>
    <property type="match status" value="1"/>
</dbReference>
<dbReference type="PROSITE" id="PS00018">
    <property type="entry name" value="EF_HAND_1"/>
    <property type="match status" value="1"/>
</dbReference>
<dbReference type="PROSITE" id="PS50222">
    <property type="entry name" value="EF_HAND_2"/>
    <property type="match status" value="2"/>
</dbReference>
<dbReference type="PROSITE" id="PS50920">
    <property type="entry name" value="SOLCAR"/>
    <property type="match status" value="3"/>
</dbReference>
<sequence length="678" mass="74762">MAVKVQTTKRGDPHELRNIFLQYASTEVDGERYMTPEDFVQRYLGLYNDPNSNPKIVQLLAGVADQTKDGLISYQEFLAFESVLCAPDSMFIVAFQLFDKSGNGEVTFENVKEIFGQTIIHHHIPFNWDCEFIRLHFGHNRKKHLNYTEFTQFLQELQLEHARQAFALKDKSKSGMISGLDFSDIMVTIRSHMLTPFVEENLVSAAGGSISHQVSFSYFNAFNSLLNNMELVRKIYSTLAGTRKDVEVTKEEFAQSAIRYGQVTPLEIDILYQLADLYNASGRLTLADIERIAPLAEGALPYNLAELQRQQSPGLGRPIWLQIAESAYRFTLGSVAGAVGATAVYPIDLVKTRMQNQRGSGSVVGELMYKNSFDCFKKVLRYEGFFGLYRGLIPQLIGVAPEKAIKLTVNDFVRDKFTRRDGSVPLPAEVLAGGCAGGSQVIFTNPLEIVKIRLQVAGEITTGPRVSALNVLRDLGIFGLYKGAKACFLRDIPFSAIYFPVYAHCKLLLADENGHVGGLNLLAAGAMAGVPAASLVTPADVIKTRLQVAARAGQTTYSGVIDCFRKILREEGPSAFWKGTAARVFRSSPQFGVTLVTYELLQRWFYIDFGGLKPAGSEPTPKSRIADLPPANPDHIGGYRLATATFAGIENKFGLYLPKFKSPSVAVVQPKAAVAATQ</sequence>
<name>S2512_HUMAN</name>
<organism evidence="22">
    <name type="scientific">Homo sapiens</name>
    <name type="common">Human</name>
    <dbReference type="NCBI Taxonomy" id="9606"/>
    <lineage>
        <taxon>Eukaryota</taxon>
        <taxon>Metazoa</taxon>
        <taxon>Chordata</taxon>
        <taxon>Craniata</taxon>
        <taxon>Vertebrata</taxon>
        <taxon>Euteleostomi</taxon>
        <taxon>Mammalia</taxon>
        <taxon>Eutheria</taxon>
        <taxon>Euarchontoglires</taxon>
        <taxon>Primates</taxon>
        <taxon>Haplorrhini</taxon>
        <taxon>Catarrhini</taxon>
        <taxon>Hominidae</taxon>
        <taxon>Homo</taxon>
    </lineage>
</organism>
<comment type="function">
    <text evidence="5 6 7 10">Mitochondrial electrogenic aspartate/glutamate antiporter that favors efflux of aspartate and entry of glutamate and proton within the mitochondria as part of the malate-aspartate shuttle (PubMed:11566871, PubMed:19641205, PubMed:24515575, PubMed:38945283). Also mediates the uptake of L-cysteinesulfinate (3-sulfino-L-alanine) by mitochondria in exchange of L-glutamate and proton (PubMed:11566871). Can also exchange L-cysteinesulfinate with aspartate in their anionic form without any proton translocation (PubMed:11566871). Lacks transport activity towards L-glutamine or gamma-aminobutyric acid (GABA) (PubMed:38945283).</text>
</comment>
<comment type="catalytic activity">
    <reaction evidence="5 6 7 10">
        <text>L-aspartate(in) + L-glutamate(out) + H(+)(out) = L-aspartate(out) + L-glutamate(in) + H(+)(in)</text>
        <dbReference type="Rhea" id="RHEA:70783"/>
        <dbReference type="ChEBI" id="CHEBI:15378"/>
        <dbReference type="ChEBI" id="CHEBI:29985"/>
        <dbReference type="ChEBI" id="CHEBI:29991"/>
    </reaction>
</comment>
<comment type="catalytic activity">
    <reaction evidence="5">
        <text>3-sulfino-L-alanine(out) + L-glutamate(in) + H(+)(in) = 3-sulfino-L-alanine(in) + L-glutamate(out) + H(+)(out)</text>
        <dbReference type="Rhea" id="RHEA:70967"/>
        <dbReference type="ChEBI" id="CHEBI:15378"/>
        <dbReference type="ChEBI" id="CHEBI:29985"/>
        <dbReference type="ChEBI" id="CHEBI:61085"/>
    </reaction>
</comment>
<comment type="catalytic activity">
    <reaction evidence="1">
        <text>3-sulfino-L-alanine(out) + L-aspartate(in) = 3-sulfino-L-alanine(in) + L-aspartate(out)</text>
        <dbReference type="Rhea" id="RHEA:70975"/>
        <dbReference type="ChEBI" id="CHEBI:29991"/>
        <dbReference type="ChEBI" id="CHEBI:61085"/>
    </reaction>
</comment>
<comment type="activity regulation">
    <text evidence="5">Activated by calcium-binding in the mitochondrial intermembrane space (PubMed:11566871). Inhibited by pyridoxal 5'-phosphate, bathophenathroline, mercurials, diethyl pyrocarbonate and N-ethylmaleimide (PubMed:11566871).</text>
</comment>
<comment type="biophysicochemical properties">
    <kinetics>
        <Vmax evidence="5">24.7 umol/min/g enzyme toward L-aspartate</Vmax>
    </kinetics>
</comment>
<comment type="subunit">
    <text evidence="8">Homodimer (via N-terminus).</text>
</comment>
<comment type="interaction">
    <interactant intactId="EBI-1047585">
        <id>O75746</id>
    </interactant>
    <interactant intactId="EBI-995373">
        <id>Q7Z434</id>
        <label>MAVS</label>
    </interactant>
    <organismsDiffer>false</organismsDiffer>
    <experiments>3</experiments>
</comment>
<comment type="interaction">
    <interactant intactId="EBI-1047585">
        <id>O75746</id>
    </interactant>
    <interactant intactId="EBI-1222503">
        <id>Q9UJS0</id>
        <label>SLC25A13</label>
    </interactant>
    <organismsDiffer>false</organismsDiffer>
    <experiments>2</experiments>
</comment>
<comment type="subcellular location">
    <subcellularLocation>
        <location evidence="5 6 7 11">Mitochondrion inner membrane</location>
        <topology evidence="5">Multi-pass membrane protein</topology>
    </subcellularLocation>
</comment>
<comment type="alternative products">
    <event type="alternative splicing"/>
    <isoform>
        <id>O75746-1</id>
        <name>1</name>
        <sequence type="displayed"/>
    </isoform>
    <isoform>
        <id>O75746-2</id>
        <name>2</name>
        <sequence type="described" ref="VSP_054469"/>
    </isoform>
</comment>
<comment type="tissue specificity">
    <text evidence="4 11">Expressed predominantly in the heart and skeletal muscle, weakly in brain and kidney.</text>
</comment>
<comment type="domain">
    <text evidence="8">The EF-hand 2 domain within the regulatory N-terminal domain binds one calcium in the mitochondrial intermembrane space. Calcium triggers the binding of the regulatory N-terminal domain to the C-terminal domain, opening a vestibule which allows the substrates to be translocated through the carrier domain. In the absence of calcium, the linker loop domain may close the vestibule and prevent substrates from entering the carrier domain.</text>
</comment>
<comment type="disease" evidence="6 7">
    <disease id="DI-02562">
        <name>Developmental and epileptic encephalopathy 39 with leukodystrophy</name>
        <acronym>DEE39</acronym>
        <description>A form of epileptic encephalopathy, a heterogeneous group of severe early-onset epilepsies characterized by refractory seizures, neurodevelopmental impairment, and poor prognosis. Development is normal prior to seizure onset, after which cognitive and motor delays become apparent. DEE39 is characterized by global hypomyelination of the central nervous system, with the gray matter appearing relatively unaffected. Inheritance is autosomal recessive.</description>
        <dbReference type="MIM" id="612949"/>
    </disease>
    <text>The disease is caused by variants affecting the gene represented in this entry.</text>
</comment>
<comment type="similarity">
    <text evidence="18">Belongs to the mitochondrial carrier (TC 2.A.29) family.</text>
</comment>
<gene>
    <name evidence="21" type="primary">SLC25A12</name>
    <name evidence="15" type="synonym">AGC1</name>
    <name evidence="12" type="synonym">ARALAR1</name>
</gene>
<accession>O75746</accession>
<accession>B3KR64</accession>
<accession>Q96AM8</accession>
<reference key="1">
    <citation type="journal article" date="1998" name="J. Biol. Chem.">
        <title>Molecular cloning of Aralar, a new member of the mitochondrial carrier superfamily that binds calcium and is present in human muscle and brain.</title>
        <authorList>
            <person name="Del Arco A."/>
            <person name="Satrustegui J."/>
        </authorList>
    </citation>
    <scope>NUCLEOTIDE SEQUENCE [MRNA] (ISOFORM 1)</scope>
    <scope>SUBCELLULAR LOCATION</scope>
    <scope>TISSUE SPECIFICITY</scope>
    <scope>TOPOLOGY</scope>
    <source>
        <tissue>Heart</tissue>
    </source>
</reference>
<reference key="2">
    <citation type="journal article" date="2001" name="EMBO J.">
        <title>Citrin and aralar1 are Ca(2+)-stimulated aspartate/glutamate transporters in mitochondria.</title>
        <authorList>
            <person name="Palmieri L."/>
            <person name="Pardo B."/>
            <person name="Lasorsa F.M."/>
            <person name="del Arco A."/>
            <person name="Kobayashi K."/>
            <person name="Iijima M."/>
            <person name="Runswick M.J."/>
            <person name="Walker J.E."/>
            <person name="Saheki T."/>
            <person name="Satrustegui J."/>
            <person name="Palmieri F."/>
        </authorList>
    </citation>
    <scope>NUCLEOTIDE SEQUENCE [MRNA] (ISOFORM 1)</scope>
    <scope>FUNCTION</scope>
    <scope>TRANSPORTER ACTIVITY</scope>
    <scope>BIOPHYSICOCHEMICAL PROPERTIES</scope>
    <scope>ACTIVITY REGULATION</scope>
    <scope>SUBCELLULAR LOCATION</scope>
    <scope>TOPOLOGY</scope>
    <source>
        <tissue>Heart</tissue>
    </source>
</reference>
<reference key="3">
    <citation type="journal article" date="2004" name="Nat. Genet.">
        <title>Complete sequencing and characterization of 21,243 full-length human cDNAs.</title>
        <authorList>
            <person name="Ota T."/>
            <person name="Suzuki Y."/>
            <person name="Nishikawa T."/>
            <person name="Otsuki T."/>
            <person name="Sugiyama T."/>
            <person name="Irie R."/>
            <person name="Wakamatsu A."/>
            <person name="Hayashi K."/>
            <person name="Sato H."/>
            <person name="Nagai K."/>
            <person name="Kimura K."/>
            <person name="Makita H."/>
            <person name="Sekine M."/>
            <person name="Obayashi M."/>
            <person name="Nishi T."/>
            <person name="Shibahara T."/>
            <person name="Tanaka T."/>
            <person name="Ishii S."/>
            <person name="Yamamoto J."/>
            <person name="Saito K."/>
            <person name="Kawai Y."/>
            <person name="Isono Y."/>
            <person name="Nakamura Y."/>
            <person name="Nagahari K."/>
            <person name="Murakami K."/>
            <person name="Yasuda T."/>
            <person name="Iwayanagi T."/>
            <person name="Wagatsuma M."/>
            <person name="Shiratori A."/>
            <person name="Sudo H."/>
            <person name="Hosoiri T."/>
            <person name="Kaku Y."/>
            <person name="Kodaira H."/>
            <person name="Kondo H."/>
            <person name="Sugawara M."/>
            <person name="Takahashi M."/>
            <person name="Kanda K."/>
            <person name="Yokoi T."/>
            <person name="Furuya T."/>
            <person name="Kikkawa E."/>
            <person name="Omura Y."/>
            <person name="Abe K."/>
            <person name="Kamihara K."/>
            <person name="Katsuta N."/>
            <person name="Sato K."/>
            <person name="Tanikawa M."/>
            <person name="Yamazaki M."/>
            <person name="Ninomiya K."/>
            <person name="Ishibashi T."/>
            <person name="Yamashita H."/>
            <person name="Murakawa K."/>
            <person name="Fujimori K."/>
            <person name="Tanai H."/>
            <person name="Kimata M."/>
            <person name="Watanabe M."/>
            <person name="Hiraoka S."/>
            <person name="Chiba Y."/>
            <person name="Ishida S."/>
            <person name="Ono Y."/>
            <person name="Takiguchi S."/>
            <person name="Watanabe S."/>
            <person name="Yosida M."/>
            <person name="Hotuta T."/>
            <person name="Kusano J."/>
            <person name="Kanehori K."/>
            <person name="Takahashi-Fujii A."/>
            <person name="Hara H."/>
            <person name="Tanase T.-O."/>
            <person name="Nomura Y."/>
            <person name="Togiya S."/>
            <person name="Komai F."/>
            <person name="Hara R."/>
            <person name="Takeuchi K."/>
            <person name="Arita M."/>
            <person name="Imose N."/>
            <person name="Musashino K."/>
            <person name="Yuuki H."/>
            <person name="Oshima A."/>
            <person name="Sasaki N."/>
            <person name="Aotsuka S."/>
            <person name="Yoshikawa Y."/>
            <person name="Matsunawa H."/>
            <person name="Ichihara T."/>
            <person name="Shiohata N."/>
            <person name="Sano S."/>
            <person name="Moriya S."/>
            <person name="Momiyama H."/>
            <person name="Satoh N."/>
            <person name="Takami S."/>
            <person name="Terashima Y."/>
            <person name="Suzuki O."/>
            <person name="Nakagawa S."/>
            <person name="Senoh A."/>
            <person name="Mizoguchi H."/>
            <person name="Goto Y."/>
            <person name="Shimizu F."/>
            <person name="Wakebe H."/>
            <person name="Hishigaki H."/>
            <person name="Watanabe T."/>
            <person name="Sugiyama A."/>
            <person name="Takemoto M."/>
            <person name="Kawakami B."/>
            <person name="Yamazaki M."/>
            <person name="Watanabe K."/>
            <person name="Kumagai A."/>
            <person name="Itakura S."/>
            <person name="Fukuzumi Y."/>
            <person name="Fujimori Y."/>
            <person name="Komiyama M."/>
            <person name="Tashiro H."/>
            <person name="Tanigami A."/>
            <person name="Fujiwara T."/>
            <person name="Ono T."/>
            <person name="Yamada K."/>
            <person name="Fujii Y."/>
            <person name="Ozaki K."/>
            <person name="Hirao M."/>
            <person name="Ohmori Y."/>
            <person name="Kawabata A."/>
            <person name="Hikiji T."/>
            <person name="Kobatake N."/>
            <person name="Inagaki H."/>
            <person name="Ikema Y."/>
            <person name="Okamoto S."/>
            <person name="Okitani R."/>
            <person name="Kawakami T."/>
            <person name="Noguchi S."/>
            <person name="Itoh T."/>
            <person name="Shigeta K."/>
            <person name="Senba T."/>
            <person name="Matsumura K."/>
            <person name="Nakajima Y."/>
            <person name="Mizuno T."/>
            <person name="Morinaga M."/>
            <person name="Sasaki M."/>
            <person name="Togashi T."/>
            <person name="Oyama M."/>
            <person name="Hata H."/>
            <person name="Watanabe M."/>
            <person name="Komatsu T."/>
            <person name="Mizushima-Sugano J."/>
            <person name="Satoh T."/>
            <person name="Shirai Y."/>
            <person name="Takahashi Y."/>
            <person name="Nakagawa K."/>
            <person name="Okumura K."/>
            <person name="Nagase T."/>
            <person name="Nomura N."/>
            <person name="Kikuchi H."/>
            <person name="Masuho Y."/>
            <person name="Yamashita R."/>
            <person name="Nakai K."/>
            <person name="Yada T."/>
            <person name="Nakamura Y."/>
            <person name="Ohara O."/>
            <person name="Isogai T."/>
            <person name="Sugano S."/>
        </authorList>
    </citation>
    <scope>NUCLEOTIDE SEQUENCE [LARGE SCALE MRNA] (ISOFORM 2)</scope>
    <source>
        <tissue>Caudate nucleus</tissue>
    </source>
</reference>
<reference key="4">
    <citation type="journal article" date="2005" name="Nature">
        <title>Generation and annotation of the DNA sequences of human chromosomes 2 and 4.</title>
        <authorList>
            <person name="Hillier L.W."/>
            <person name="Graves T.A."/>
            <person name="Fulton R.S."/>
            <person name="Fulton L.A."/>
            <person name="Pepin K.H."/>
            <person name="Minx P."/>
            <person name="Wagner-McPherson C."/>
            <person name="Layman D."/>
            <person name="Wylie K."/>
            <person name="Sekhon M."/>
            <person name="Becker M.C."/>
            <person name="Fewell G.A."/>
            <person name="Delehaunty K.D."/>
            <person name="Miner T.L."/>
            <person name="Nash W.E."/>
            <person name="Kremitzki C."/>
            <person name="Oddy L."/>
            <person name="Du H."/>
            <person name="Sun H."/>
            <person name="Bradshaw-Cordum H."/>
            <person name="Ali J."/>
            <person name="Carter J."/>
            <person name="Cordes M."/>
            <person name="Harris A."/>
            <person name="Isak A."/>
            <person name="van Brunt A."/>
            <person name="Nguyen C."/>
            <person name="Du F."/>
            <person name="Courtney L."/>
            <person name="Kalicki J."/>
            <person name="Ozersky P."/>
            <person name="Abbott S."/>
            <person name="Armstrong J."/>
            <person name="Belter E.A."/>
            <person name="Caruso L."/>
            <person name="Cedroni M."/>
            <person name="Cotton M."/>
            <person name="Davidson T."/>
            <person name="Desai A."/>
            <person name="Elliott G."/>
            <person name="Erb T."/>
            <person name="Fronick C."/>
            <person name="Gaige T."/>
            <person name="Haakenson W."/>
            <person name="Haglund K."/>
            <person name="Holmes A."/>
            <person name="Harkins R."/>
            <person name="Kim K."/>
            <person name="Kruchowski S.S."/>
            <person name="Strong C.M."/>
            <person name="Grewal N."/>
            <person name="Goyea E."/>
            <person name="Hou S."/>
            <person name="Levy A."/>
            <person name="Martinka S."/>
            <person name="Mead K."/>
            <person name="McLellan M.D."/>
            <person name="Meyer R."/>
            <person name="Randall-Maher J."/>
            <person name="Tomlinson C."/>
            <person name="Dauphin-Kohlberg S."/>
            <person name="Kozlowicz-Reilly A."/>
            <person name="Shah N."/>
            <person name="Swearengen-Shahid S."/>
            <person name="Snider J."/>
            <person name="Strong J.T."/>
            <person name="Thompson J."/>
            <person name="Yoakum M."/>
            <person name="Leonard S."/>
            <person name="Pearman C."/>
            <person name="Trani L."/>
            <person name="Radionenko M."/>
            <person name="Waligorski J.E."/>
            <person name="Wang C."/>
            <person name="Rock S.M."/>
            <person name="Tin-Wollam A.-M."/>
            <person name="Maupin R."/>
            <person name="Latreille P."/>
            <person name="Wendl M.C."/>
            <person name="Yang S.-P."/>
            <person name="Pohl C."/>
            <person name="Wallis J.W."/>
            <person name="Spieth J."/>
            <person name="Bieri T.A."/>
            <person name="Berkowicz N."/>
            <person name="Nelson J.O."/>
            <person name="Osborne J."/>
            <person name="Ding L."/>
            <person name="Meyer R."/>
            <person name="Sabo A."/>
            <person name="Shotland Y."/>
            <person name="Sinha P."/>
            <person name="Wohldmann P.E."/>
            <person name="Cook L.L."/>
            <person name="Hickenbotham M.T."/>
            <person name="Eldred J."/>
            <person name="Williams D."/>
            <person name="Jones T.A."/>
            <person name="She X."/>
            <person name="Ciccarelli F.D."/>
            <person name="Izaurralde E."/>
            <person name="Taylor J."/>
            <person name="Schmutz J."/>
            <person name="Myers R.M."/>
            <person name="Cox D.R."/>
            <person name="Huang X."/>
            <person name="McPherson J.D."/>
            <person name="Mardis E.R."/>
            <person name="Clifton S.W."/>
            <person name="Warren W.C."/>
            <person name="Chinwalla A.T."/>
            <person name="Eddy S.R."/>
            <person name="Marra M.A."/>
            <person name="Ovcharenko I."/>
            <person name="Furey T.S."/>
            <person name="Miller W."/>
            <person name="Eichler E.E."/>
            <person name="Bork P."/>
            <person name="Suyama M."/>
            <person name="Torrents D."/>
            <person name="Waterston R.H."/>
            <person name="Wilson R.K."/>
        </authorList>
    </citation>
    <scope>NUCLEOTIDE SEQUENCE [LARGE SCALE GENOMIC DNA]</scope>
</reference>
<reference key="5">
    <citation type="submission" date="2005-09" db="EMBL/GenBank/DDBJ databases">
        <authorList>
            <person name="Mural R.J."/>
            <person name="Istrail S."/>
            <person name="Sutton G.G."/>
            <person name="Florea L."/>
            <person name="Halpern A.L."/>
            <person name="Mobarry C.M."/>
            <person name="Lippert R."/>
            <person name="Walenz B."/>
            <person name="Shatkay H."/>
            <person name="Dew I."/>
            <person name="Miller J.R."/>
            <person name="Flanigan M.J."/>
            <person name="Edwards N.J."/>
            <person name="Bolanos R."/>
            <person name="Fasulo D."/>
            <person name="Halldorsson B.V."/>
            <person name="Hannenhalli S."/>
            <person name="Turner R."/>
            <person name="Yooseph S."/>
            <person name="Lu F."/>
            <person name="Nusskern D.R."/>
            <person name="Shue B.C."/>
            <person name="Zheng X.H."/>
            <person name="Zhong F."/>
            <person name="Delcher A.L."/>
            <person name="Huson D.H."/>
            <person name="Kravitz S.A."/>
            <person name="Mouchard L."/>
            <person name="Reinert K."/>
            <person name="Remington K.A."/>
            <person name="Clark A.G."/>
            <person name="Waterman M.S."/>
            <person name="Eichler E.E."/>
            <person name="Adams M.D."/>
            <person name="Hunkapiller M.W."/>
            <person name="Myers E.W."/>
            <person name="Venter J.C."/>
        </authorList>
    </citation>
    <scope>NUCLEOTIDE SEQUENCE [LARGE SCALE GENOMIC DNA]</scope>
</reference>
<reference key="6">
    <citation type="journal article" date="2004" name="Genome Res.">
        <title>The status, quality, and expansion of the NIH full-length cDNA project: the Mammalian Gene Collection (MGC).</title>
        <authorList>
            <consortium name="The MGC Project Team"/>
        </authorList>
    </citation>
    <scope>NUCLEOTIDE SEQUENCE [LARGE SCALE MRNA] (ISOFORM 1)</scope>
    <source>
        <tissue>Lymph</tissue>
    </source>
</reference>
<reference key="7">
    <citation type="journal article" date="1999" name="Nat. Genet.">
        <title>The gene mutated in adult-onset type II citrullinaemia encodes a putative mitochondrial carrier protein.</title>
        <authorList>
            <person name="Kobayashi K."/>
            <person name="Sinasac D.S."/>
            <person name="Iijima M."/>
            <person name="Boright A.P."/>
            <person name="Begum L."/>
            <person name="Lee J.R."/>
            <person name="Yasuda T."/>
            <person name="Ikeda S."/>
            <person name="Hirano R."/>
            <person name="Terazono H."/>
            <person name="Crackower M.A."/>
            <person name="Kondo I."/>
            <person name="Tsui L.-C."/>
            <person name="Scherer S.W."/>
            <person name="Saheki T."/>
        </authorList>
    </citation>
    <scope>TISSUE SPECIFICITY</scope>
</reference>
<reference key="8">
    <citation type="journal article" date="2000" name="Biochem. J.">
        <title>Characterization of a second member of the subfamily of calcium-binding mitochondrial carriers expressed in human non-excitable tissues.</title>
        <authorList>
            <person name="Del Arco A."/>
            <person name="Agudo M."/>
            <person name="Satrustegui J."/>
        </authorList>
    </citation>
    <scope>NOMENCLATURE</scope>
</reference>
<reference key="9">
    <citation type="journal article" date="2011" name="BMC Syst. Biol.">
        <title>Initial characterization of the human central proteome.</title>
        <authorList>
            <person name="Burkard T.R."/>
            <person name="Planyavsky M."/>
            <person name="Kaupe I."/>
            <person name="Breitwieser F.P."/>
            <person name="Buerckstuemmer T."/>
            <person name="Bennett K.L."/>
            <person name="Superti-Furga G."/>
            <person name="Colinge J."/>
        </authorList>
    </citation>
    <scope>IDENTIFICATION BY MASS SPECTROMETRY [LARGE SCALE ANALYSIS]</scope>
</reference>
<reference key="10">
    <citation type="journal article" date="2012" name="Proc. Natl. Acad. Sci. U.S.A.">
        <title>N-terminal acetylome analyses and functional insights of the N-terminal acetyltransferase NatB.</title>
        <authorList>
            <person name="Van Damme P."/>
            <person name="Lasa M."/>
            <person name="Polevoda B."/>
            <person name="Gazquez C."/>
            <person name="Elosegui-Artola A."/>
            <person name="Kim D.S."/>
            <person name="De Juan-Pardo E."/>
            <person name="Demeyer K."/>
            <person name="Hole K."/>
            <person name="Larrea E."/>
            <person name="Timmerman E."/>
            <person name="Prieto J."/>
            <person name="Arnesen T."/>
            <person name="Sherman F."/>
            <person name="Gevaert K."/>
            <person name="Aldabe R."/>
        </authorList>
    </citation>
    <scope>ACETYLATION [LARGE SCALE ANALYSIS] AT ALA-2</scope>
    <scope>CLEAVAGE OF INITIATOR METHIONINE [LARGE SCALE ANALYSIS]</scope>
    <scope>IDENTIFICATION BY MASS SPECTROMETRY [LARGE SCALE ANALYSIS]</scope>
</reference>
<reference key="11">
    <citation type="journal article" date="2015" name="Hum. Mol. Genet.">
        <title>Biochemical and cellular analysis of Ogden syndrome reveals downstream Nt-acetylation defects.</title>
        <authorList>
            <person name="Myklebust L.M."/>
            <person name="Van Damme P."/>
            <person name="Stoeve S.I."/>
            <person name="Doerfel M.J."/>
            <person name="Abboud A."/>
            <person name="Kalvik T.V."/>
            <person name="Grauffel C."/>
            <person name="Jonckheere V."/>
            <person name="Wu Y."/>
            <person name="Swensen J."/>
            <person name="Kaasa H."/>
            <person name="Liszczak G."/>
            <person name="Marmorstein R."/>
            <person name="Reuter N."/>
            <person name="Lyon G.J."/>
            <person name="Gevaert K."/>
            <person name="Arnesen T."/>
        </authorList>
    </citation>
    <scope>ACETYLATION AT ALA-2</scope>
    <scope>CLEAVAGE OF INITIATOR METHIONINE</scope>
</reference>
<reference key="12">
    <citation type="journal article" date="2015" name="Proteomics">
        <title>N-terminome analysis of the human mitochondrial proteome.</title>
        <authorList>
            <person name="Vaca Jacome A.S."/>
            <person name="Rabilloud T."/>
            <person name="Schaeffer-Reiss C."/>
            <person name="Rompais M."/>
            <person name="Ayoub D."/>
            <person name="Lane L."/>
            <person name="Bairoch A."/>
            <person name="Van Dorsselaer A."/>
            <person name="Carapito C."/>
        </authorList>
    </citation>
    <scope>IDENTIFICATION BY MASS SPECTROMETRY [LARGE SCALE ANALYSIS]</scope>
</reference>
<reference key="13">
    <citation type="journal article" date="2024" name="Biochim. Biophys. Acta">
        <title>The mitochondrial aspartate/glutamate carrier does not transport GABA.</title>
        <authorList>
            <person name="Porcelli V."/>
            <person name="Barile S."/>
            <person name="Capobianco L."/>
            <person name="Barile S.N."/>
            <person name="Gorgoglione R."/>
            <person name="Fiermonte G."/>
            <person name="Monti B."/>
            <person name="Lasorsa F.M."/>
            <person name="Palmieri L."/>
        </authorList>
    </citation>
    <scope>FUNCTION</scope>
    <scope>TRANSPORTER ACTIVITY</scope>
    <scope>LACK OF GABA TRANSPORT ACTIVITY</scope>
</reference>
<reference key="14">
    <citation type="journal article" date="2009" name="N. Engl. J. Med.">
        <title>AGC1 deficiency associated with global cerebral hypomyelination.</title>
        <authorList>
            <person name="Wibom R."/>
            <person name="Lasorsa F.M."/>
            <person name="Tohonen V."/>
            <person name="Barbaro M."/>
            <person name="Sterky F.H."/>
            <person name="Kucinski T."/>
            <person name="Naess K."/>
            <person name="Jonsson M."/>
            <person name="Pierri C.L."/>
            <person name="Palmieri F."/>
            <person name="Wedell A."/>
        </authorList>
    </citation>
    <scope>VARIANT DEE39 ARG-590</scope>
    <scope>CHARACTERIZATION OF VARIANT DEE39 ARG-590</scope>
    <scope>FUNCTION</scope>
    <scope>TRANSPORTER ACTIVITY</scope>
    <scope>SUBCELLULAR LOCATION</scope>
</reference>
<reference key="15">
    <citation type="journal article" date="2009" name="N. Engl. J. Med.">
        <authorList>
            <person name="Wibom R."/>
            <person name="Lasorsa F.M."/>
            <person name="Tohonen V."/>
            <person name="Barbaro M."/>
            <person name="Sterky F.H."/>
            <person name="Kucinski T."/>
            <person name="Naess K."/>
            <person name="Jonsson M."/>
            <person name="Pierri C.L."/>
            <person name="Palmieri F."/>
            <person name="Wedell A."/>
        </authorList>
    </citation>
    <scope>ERRATUM OF PUBMED:19641205</scope>
</reference>
<reference key="16">
    <citation type="journal article" date="2014" name="JIMD Rep.">
        <title>AGC1 deficiency causes infantile epilepsy, abnormal myelination, and reduced n-acetylaspartate.</title>
        <authorList>
            <person name="Falk M.J."/>
            <person name="Li D."/>
            <person name="Gai X."/>
            <person name="McCormick E."/>
            <person name="Place E."/>
            <person name="Lasorsa F.M."/>
            <person name="Otieno F.G."/>
            <person name="Hou C."/>
            <person name="Kim C.E."/>
            <person name="Abdel-Magid N."/>
            <person name="Vazquez L."/>
            <person name="Mentch F.D."/>
            <person name="Chiavacci R."/>
            <person name="Liang J."/>
            <person name="Liu X."/>
            <person name="Jiang H."/>
            <person name="Giannuzzi G."/>
            <person name="Marsh E.D."/>
            <person name="Yiran G."/>
            <person name="Tian L."/>
            <person name="Palmieri F."/>
            <person name="Hakonarson H."/>
        </authorList>
    </citation>
    <scope>VARIANT DEE39 GLN-353</scope>
    <scope>CHARACTERIZATION OF VARIANT DEE39 GLN-353</scope>
    <scope>FUNCTION</scope>
    <scope>TRANSPORTER ACTIVITY</scope>
    <scope>SUBCELLULAR LOCATION</scope>
</reference>
<reference evidence="23 24" key="17">
    <citation type="journal article" date="2014" name="Nat. Commun.">
        <title>Calcium-induced conformational changes of the regulatory domain of human mitochondrial aspartate/glutamate carriers.</title>
        <authorList>
            <person name="Thangaratnarajah C."/>
            <person name="Ruprecht J.J."/>
            <person name="Kunji E.R."/>
        </authorList>
    </citation>
    <scope>X-RAY CRYSTALLOGRAPHY (2.26 ANGSTROMS) OF 2-311 OF HOMODIMER IN COMPLEX WITH CALCIUM</scope>
    <scope>SUBUNIT</scope>
    <scope>CALCIUM-BINDING</scope>
    <scope>DOMAINS</scope>
</reference>
<evidence type="ECO:0000250" key="1">
    <source>
        <dbReference type="UniProtKB" id="F1LX07"/>
    </source>
</evidence>
<evidence type="ECO:0000255" key="2">
    <source>
        <dbReference type="PROSITE-ProRule" id="PRU00282"/>
    </source>
</evidence>
<evidence type="ECO:0000255" key="3">
    <source>
        <dbReference type="PROSITE-ProRule" id="PRU00448"/>
    </source>
</evidence>
<evidence type="ECO:0000269" key="4">
    <source>
    </source>
</evidence>
<evidence type="ECO:0000269" key="5">
    <source>
    </source>
</evidence>
<evidence type="ECO:0000269" key="6">
    <source>
    </source>
</evidence>
<evidence type="ECO:0000269" key="7">
    <source>
    </source>
</evidence>
<evidence type="ECO:0000269" key="8">
    <source>
    </source>
</evidence>
<evidence type="ECO:0000269" key="9">
    <source>
    </source>
</evidence>
<evidence type="ECO:0000269" key="10">
    <source>
    </source>
</evidence>
<evidence type="ECO:0000269" key="11">
    <source>
    </source>
</evidence>
<evidence type="ECO:0000303" key="12">
    <source>
    </source>
</evidence>
<evidence type="ECO:0000303" key="13">
    <source>
    </source>
</evidence>
<evidence type="ECO:0000303" key="14">
    <source>
    </source>
</evidence>
<evidence type="ECO:0000303" key="15">
    <source>
    </source>
</evidence>
<evidence type="ECO:0000303" key="16">
    <source>
    </source>
</evidence>
<evidence type="ECO:0000303" key="17">
    <source>
    </source>
</evidence>
<evidence type="ECO:0000305" key="18"/>
<evidence type="ECO:0000305" key="19">
    <source>
    </source>
</evidence>
<evidence type="ECO:0000305" key="20">
    <source>
    </source>
</evidence>
<evidence type="ECO:0000312" key="21">
    <source>
        <dbReference type="HGNC" id="HGNC:10982"/>
    </source>
</evidence>
<evidence type="ECO:0000312" key="22">
    <source>
        <dbReference type="Proteomes" id="UP000005640"/>
    </source>
</evidence>
<evidence type="ECO:0007744" key="23">
    <source>
        <dbReference type="PDB" id="4P5X"/>
    </source>
</evidence>
<evidence type="ECO:0007744" key="24">
    <source>
        <dbReference type="PDB" id="4P60"/>
    </source>
</evidence>
<evidence type="ECO:0007744" key="25">
    <source>
    </source>
</evidence>
<evidence type="ECO:0007829" key="26">
    <source>
        <dbReference type="PDB" id="4P5X"/>
    </source>
</evidence>
<evidence type="ECO:0007829" key="27">
    <source>
        <dbReference type="PDB" id="4P60"/>
    </source>
</evidence>
<keyword id="KW-0002">3D-structure</keyword>
<keyword id="KW-0007">Acetylation</keyword>
<keyword id="KW-0025">Alternative splicing</keyword>
<keyword id="KW-0106">Calcium</keyword>
<keyword id="KW-0225">Disease variant</keyword>
<keyword id="KW-0472">Membrane</keyword>
<keyword id="KW-0479">Metal-binding</keyword>
<keyword id="KW-0496">Mitochondrion</keyword>
<keyword id="KW-0999">Mitochondrion inner membrane</keyword>
<keyword id="KW-1267">Proteomics identification</keyword>
<keyword id="KW-1185">Reference proteome</keyword>
<keyword id="KW-0677">Repeat</keyword>
<keyword id="KW-0812">Transmembrane</keyword>
<keyword id="KW-1133">Transmembrane helix</keyword>
<keyword id="KW-0813">Transport</keyword>
<feature type="initiator methionine" description="Removed" evidence="9 25">
    <location>
        <position position="1"/>
    </location>
</feature>
<feature type="chain" id="PRO_0000090598" description="Electrogenic aspartate/glutamate antiporter SLC25A12, mitochondrial">
    <location>
        <begin position="2"/>
        <end position="678"/>
    </location>
</feature>
<feature type="topological domain" description="Mitochondrial intermembrane" evidence="5">
    <location>
        <begin position="2"/>
        <end position="329"/>
    </location>
</feature>
<feature type="transmembrane region" description="Helical; Name=1" evidence="20">
    <location>
        <begin position="330"/>
        <end position="347"/>
    </location>
</feature>
<feature type="topological domain" description="Mitochondrial matrix" evidence="19">
    <location>
        <begin position="348"/>
        <end position="390"/>
    </location>
</feature>
<feature type="transmembrane region" description="Helical; Name=2" evidence="20">
    <location>
        <begin position="391"/>
        <end position="410"/>
    </location>
</feature>
<feature type="topological domain" description="Mitochondrial intermembrane" evidence="19">
    <location>
        <begin position="411"/>
        <end position="433"/>
    </location>
</feature>
<feature type="transmembrane region" description="Helical; Name=3" evidence="20">
    <location>
        <begin position="434"/>
        <end position="447"/>
    </location>
</feature>
<feature type="topological domain" description="Mitochondrial matrix" evidence="19">
    <location>
        <begin position="448"/>
        <end position="482"/>
    </location>
</feature>
<feature type="transmembrane region" description="Helical; Name=4" evidence="20">
    <location>
        <begin position="483"/>
        <end position="502"/>
    </location>
</feature>
<feature type="topological domain" description="Mitochondrial intermembrane" evidence="19">
    <location>
        <begin position="503"/>
        <end position="521"/>
    </location>
</feature>
<feature type="transmembrane region" description="Helical; Name=5" evidence="20">
    <location>
        <begin position="522"/>
        <end position="539"/>
    </location>
</feature>
<feature type="topological domain" description="Mitochondrial matrix" evidence="19">
    <location>
        <begin position="540"/>
        <end position="578"/>
    </location>
</feature>
<feature type="transmembrane region" description="Helical; Name=6" evidence="20">
    <location>
        <begin position="579"/>
        <end position="598"/>
    </location>
</feature>
<feature type="topological domain" description="Mitochondrial intermembrane" evidence="19">
    <location>
        <begin position="599"/>
        <end position="678"/>
    </location>
</feature>
<feature type="domain" description="EF-hand 1" evidence="18">
    <location>
        <begin position="65"/>
        <end position="76"/>
    </location>
</feature>
<feature type="domain" description="EF-hand 2" evidence="3">
    <location>
        <begin position="86"/>
        <end position="121"/>
    </location>
</feature>
<feature type="domain" description="EF-hand 3" evidence="18">
    <location>
        <begin position="125"/>
        <end position="155"/>
    </location>
</feature>
<feature type="domain" description="EF-hand 4" evidence="3">
    <location>
        <begin position="157"/>
        <end position="192"/>
    </location>
</feature>
<feature type="repeat" description="Solcar 1" evidence="2">
    <location>
        <begin position="324"/>
        <end position="416"/>
    </location>
</feature>
<feature type="repeat" description="Solcar 2" evidence="2">
    <location>
        <begin position="424"/>
        <end position="508"/>
    </location>
</feature>
<feature type="repeat" description="Solcar 3" evidence="2">
    <location>
        <begin position="516"/>
        <end position="604"/>
    </location>
</feature>
<feature type="region of interest" description="Regulatory N-terminal domain" evidence="16">
    <location>
        <begin position="2"/>
        <end position="294"/>
    </location>
</feature>
<feature type="region of interest" description="Linker loop domain" evidence="16">
    <location>
        <begin position="295"/>
        <end position="310"/>
    </location>
</feature>
<feature type="region of interest" description="Carrier domain" evidence="16">
    <location>
        <begin position="320"/>
        <end position="612"/>
    </location>
</feature>
<feature type="region of interest" description="C-terminal domain" evidence="16">
    <location>
        <begin position="613"/>
        <end position="675"/>
    </location>
</feature>
<feature type="binding site" evidence="8 23">
    <location>
        <position position="65"/>
    </location>
    <ligand>
        <name>Ca(2+)</name>
        <dbReference type="ChEBI" id="CHEBI:29108"/>
    </ligand>
</feature>
<feature type="binding site" evidence="8 23">
    <location>
        <position position="67"/>
    </location>
    <ligand>
        <name>Ca(2+)</name>
        <dbReference type="ChEBI" id="CHEBI:29108"/>
    </ligand>
</feature>
<feature type="binding site" evidence="8 23">
    <location>
        <position position="69"/>
    </location>
    <ligand>
        <name>Ca(2+)</name>
        <dbReference type="ChEBI" id="CHEBI:29108"/>
    </ligand>
</feature>
<feature type="binding site" evidence="8 23">
    <location>
        <position position="71"/>
    </location>
    <ligand>
        <name>Ca(2+)</name>
        <dbReference type="ChEBI" id="CHEBI:29108"/>
    </ligand>
</feature>
<feature type="binding site" evidence="8 23">
    <location>
        <position position="76"/>
    </location>
    <ligand>
        <name>Ca(2+)</name>
        <dbReference type="ChEBI" id="CHEBI:29108"/>
    </ligand>
</feature>
<feature type="modified residue" description="N-acetylalanine" evidence="9 25">
    <location>
        <position position="2"/>
    </location>
</feature>
<feature type="splice variant" id="VSP_054469" description="In isoform 2." evidence="14">
    <original>MAVKVQTTKRGDPHELRNIFLQYASTEVDGERYMTPEDFVQRYLGLYNDPNSNPKIVQLLAGVADQTKDGLISYQEFLAFESVLCAPDSMFIVAFQLFDKSGNGEVTF</original>
    <variation>M</variation>
    <location>
        <begin position="1"/>
        <end position="108"/>
    </location>
</feature>
<feature type="sequence variant" id="VAR_071976" description="In DEE39; decreased antiporter activity; significant loss in ability to transport aspartate or glutamate; no effect on localization to mitochondrial inner membrane; no effect on protein abundance; dbSNP:rs886037851." evidence="7">
    <original>R</original>
    <variation>Q</variation>
    <location>
        <position position="353"/>
    </location>
</feature>
<feature type="sequence variant" id="VAR_047917" description="In dbSNP:rs35565687.">
    <original>R</original>
    <variation>Q</variation>
    <location>
        <position position="473"/>
    </location>
</feature>
<feature type="sequence variant" id="VAR_063253" description="In DEE39; loss of antiporter activity; unable to transport aspartate or glutamate; no effect on localization to mitochondrial inner membrane; no effect on protein abundance; dbSNP:rs121434396." evidence="6">
    <original>Q</original>
    <variation>R</variation>
    <location>
        <position position="590"/>
    </location>
</feature>
<feature type="sequence conflict" description="In Ref. 1; CAA74834." evidence="18" ref="1">
    <original>VT</original>
    <variation>AH</variation>
    <location>
        <begin position="596"/>
        <end position="597"/>
    </location>
</feature>
<feature type="sequence conflict" description="In Ref. 1; CAA74834." evidence="18" ref="1">
    <original>L</original>
    <variation>V</variation>
    <location>
        <position position="600"/>
    </location>
</feature>
<feature type="helix" evidence="26">
    <location>
        <begin position="15"/>
        <end position="23"/>
    </location>
</feature>
<feature type="strand" evidence="26">
    <location>
        <begin position="26"/>
        <end position="28"/>
    </location>
</feature>
<feature type="strand" evidence="26">
    <location>
        <begin position="31"/>
        <end position="34"/>
    </location>
</feature>
<feature type="helix" evidence="26">
    <location>
        <begin position="36"/>
        <end position="40"/>
    </location>
</feature>
<feature type="turn" evidence="26">
    <location>
        <begin position="41"/>
        <end position="43"/>
    </location>
</feature>
<feature type="helix" evidence="26">
    <location>
        <begin position="54"/>
        <end position="64"/>
    </location>
</feature>
<feature type="strand" evidence="27">
    <location>
        <begin position="69"/>
        <end position="71"/>
    </location>
</feature>
<feature type="helix" evidence="26">
    <location>
        <begin position="74"/>
        <end position="84"/>
    </location>
</feature>
<feature type="helix" evidence="26">
    <location>
        <begin position="89"/>
        <end position="98"/>
    </location>
</feature>
<feature type="helix" evidence="26">
    <location>
        <begin position="108"/>
        <end position="117"/>
    </location>
</feature>
<feature type="strand" evidence="26">
    <location>
        <begin position="128"/>
        <end position="130"/>
    </location>
</feature>
<feature type="helix" evidence="26">
    <location>
        <begin position="131"/>
        <end position="137"/>
    </location>
</feature>
<feature type="turn" evidence="26">
    <location>
        <begin position="138"/>
        <end position="141"/>
    </location>
</feature>
<feature type="helix" evidence="26">
    <location>
        <begin position="147"/>
        <end position="169"/>
    </location>
</feature>
<feature type="strand" evidence="26">
    <location>
        <begin position="174"/>
        <end position="177"/>
    </location>
</feature>
<feature type="helix" evidence="26">
    <location>
        <begin position="179"/>
        <end position="189"/>
    </location>
</feature>
<feature type="helix" evidence="26">
    <location>
        <begin position="191"/>
        <end position="193"/>
    </location>
</feature>
<feature type="helix" evidence="26">
    <location>
        <begin position="196"/>
        <end position="200"/>
    </location>
</feature>
<feature type="helix" evidence="26">
    <location>
        <begin position="202"/>
        <end position="205"/>
    </location>
</feature>
<feature type="turn" evidence="27">
    <location>
        <begin position="206"/>
        <end position="210"/>
    </location>
</feature>
<feature type="strand" evidence="27">
    <location>
        <begin position="212"/>
        <end position="215"/>
    </location>
</feature>
<feature type="helix" evidence="26">
    <location>
        <begin position="216"/>
        <end position="227"/>
    </location>
</feature>
<feature type="helix" evidence="26">
    <location>
        <begin position="229"/>
        <end position="238"/>
    </location>
</feature>
<feature type="helix" evidence="26">
    <location>
        <begin position="250"/>
        <end position="257"/>
    </location>
</feature>
<feature type="turn" evidence="26">
    <location>
        <begin position="258"/>
        <end position="261"/>
    </location>
</feature>
<feature type="helix" evidence="26">
    <location>
        <begin position="265"/>
        <end position="276"/>
    </location>
</feature>
<feature type="strand" evidence="26">
    <location>
        <begin position="282"/>
        <end position="284"/>
    </location>
</feature>
<feature type="helix" evidence="26">
    <location>
        <begin position="286"/>
        <end position="292"/>
    </location>
</feature>
<feature type="strand" evidence="27">
    <location>
        <begin position="300"/>
        <end position="302"/>
    </location>
</feature>
<feature type="turn" evidence="27">
    <location>
        <begin position="305"/>
        <end position="307"/>
    </location>
</feature>
<protein>
    <recommendedName>
        <fullName evidence="20">Electrogenic aspartate/glutamate antiporter SLC25A12, mitochondrial</fullName>
    </recommendedName>
    <alternativeName>
        <fullName evidence="17">Araceli hiperlarga</fullName>
        <shortName evidence="17">Aralar</shortName>
        <shortName evidence="13">Aralar1</shortName>
    </alternativeName>
    <alternativeName>
        <fullName evidence="15">Mitochondrial aspartate glutamate carrier 1</fullName>
    </alternativeName>
    <alternativeName>
        <fullName evidence="21">Solute carrier family 25 member 12</fullName>
    </alternativeName>
</protein>